<comment type="function">
    <text evidence="7">Component of a Polycomb group (PcG) multiprotein PRC1-like complex, a complex class required to maintain the transcriptionally repressive state of many genes, including Hox genes, throughout development. PcG PRC1 complex acts via chromatin remodeling and modification of histones; it mediates monoubiquitination of histone H2A 'Lys-119', rendering chromatin heritably changed in its expressibility.</text>
</comment>
<comment type="subunit">
    <text evidence="1 7 8 9 10 11 12">Component of a PRC1-like complex. Interacts with CBX4 (By similarity). Interacts with BMI1, PCGF2, PHC1 and RNF2 (PubMed:16024804, PubMed:27827373, PubMed:9627119). Interacts with CHTOP (PubMed:22872859). Interacts with the N-terminal region of the SP1 transcription factor and with MAPKAPK2 (By similarity). Interacts with SAMD7 (PubMed:28900001). Interacts with SAMD11 (PubMed:27827373).</text>
</comment>
<comment type="interaction">
    <interactant intactId="EBI-642357">
        <id>Q9QWH1</id>
    </interactant>
    <interactant intactId="EBI-927401">
        <id>P25916</id>
        <label>Bmi1</label>
    </interactant>
    <organismsDiffer>false</organismsDiffer>
    <experiments>3</experiments>
</comment>
<comment type="interaction">
    <interactant intactId="EBI-642357">
        <id>Q9QWH1</id>
    </interactant>
    <interactant intactId="EBI-298776">
        <id>P49138</id>
        <label>Mapkapk2</label>
    </interactant>
    <organismsDiffer>false</organismsDiffer>
    <experiments>5</experiments>
</comment>
<comment type="interaction">
    <interactant intactId="EBI-642357">
        <id>Q9QWH1</id>
    </interactant>
    <interactant intactId="EBI-926857">
        <id>P23798</id>
        <label>Pcgf2</label>
    </interactant>
    <organismsDiffer>false</organismsDiffer>
    <experiments>5</experiments>
</comment>
<comment type="interaction">
    <interactant intactId="EBI-642357">
        <id>Q9QWH1</id>
    </interactant>
    <interactant intactId="EBI-927346">
        <id>Q64028</id>
        <label>Phc1</label>
    </interactant>
    <organismsDiffer>false</organismsDiffer>
    <experiments>2</experiments>
</comment>
<comment type="interaction">
    <interactant intactId="EBI-642357">
        <id>Q9QWH1</id>
    </interactant>
    <interactant intactId="EBI-929310">
        <id>O35730</id>
        <label>Ring1</label>
    </interactant>
    <organismsDiffer>false</organismsDiffer>
    <experiments>2</experiments>
</comment>
<comment type="interaction">
    <interactant intactId="EBI-642357">
        <id>Q9QWH1</id>
    </interactant>
    <interactant intactId="EBI-927321">
        <id>Q9CQJ4</id>
        <label>Rnf2</label>
    </interactant>
    <organismsDiffer>false</organismsDiffer>
    <experiments>7</experiments>
</comment>
<comment type="interaction">
    <interactant intactId="EBI-642357">
        <id>Q9QWH1</id>
    </interactant>
    <interactant intactId="EBI-993299">
        <id>P49137</id>
        <label>MAPKAPK2</label>
    </interactant>
    <organismsDiffer>true</organismsDiffer>
    <experiments>2</experiments>
</comment>
<comment type="subcellular location">
    <subcellularLocation>
        <location evidence="10">Nucleus</location>
    </subcellularLocation>
    <text evidence="10">Co-localizes with SAMD7 in nuclear polycomb bodies.</text>
</comment>
<comment type="alternative products">
    <event type="alternative splicing"/>
    <isoform>
        <id>Q9QWH1-1</id>
        <name>1</name>
        <sequence type="displayed"/>
    </isoform>
    <isoform>
        <id>Q9QWH1-2</id>
        <name>2</name>
        <sequence type="described" ref="VSP_016919"/>
    </isoform>
</comment>
<comment type="tissue specificity">
    <text evidence="5">Isoform 2 is ubiquitously expressed in embryos and adult tissues at much higher level than isoform 1.</text>
</comment>
<comment type="developmental stage">
    <text evidence="6">Detected at 11.5 dpc in the developing brain, in the ventricular zones of the cortex and ganglionic eminences as well as in adult, in mature structures such as the granule cell layer of the dentate gyrus and cerebellum.</text>
</comment>
<comment type="domain">
    <text evidence="5">HD1 motif interacts with SAM domain of PHC1.</text>
</comment>
<comment type="disruption phenotype">
    <text evidence="7">Mice are viable and fertile but show posterior transformations of the axial skeleton and premature senescence of mouse embryonic fibroblast associated with derepression of Hox cluster genes and Cdkn2a genes, respectively. Mice lacking Phc2 and Phc1 die at an early gestational stage. Mice mutant for Phc1 and/or Phc2 demonstrate that Phc1 and Phc2 mutations affect synergistically the survival of embryos in a gene dosage-dependent manner and thus show functional redundancy of Phc1 and Phc2.</text>
</comment>
<proteinExistence type="evidence at protein level"/>
<name>PHC2_MOUSE</name>
<feature type="chain" id="PRO_0000076287" description="Polyhomeotic-like protein 2">
    <location>
        <begin position="1"/>
        <end position="850"/>
    </location>
</feature>
<feature type="domain" description="SAM" evidence="2">
    <location>
        <begin position="786"/>
        <end position="850"/>
    </location>
</feature>
<feature type="zinc finger region" description="FCS-type" evidence="3">
    <location>
        <begin position="625"/>
        <end position="659"/>
    </location>
</feature>
<feature type="region of interest" description="Disordered" evidence="9">
    <location>
        <begin position="1"/>
        <end position="79"/>
    </location>
</feature>
<feature type="region of interest" description="Interaction with BMI1" evidence="9">
    <location>
        <begin position="33"/>
        <end position="56"/>
    </location>
</feature>
<feature type="region of interest" description="Disordered" evidence="4">
    <location>
        <begin position="233"/>
        <end position="314"/>
    </location>
</feature>
<feature type="region of interest" description="Disordered" evidence="4">
    <location>
        <begin position="335"/>
        <end position="386"/>
    </location>
</feature>
<feature type="region of interest" description="Disordered" evidence="4">
    <location>
        <begin position="402"/>
        <end position="436"/>
    </location>
</feature>
<feature type="region of interest" description="Disordered" evidence="4">
    <location>
        <begin position="528"/>
        <end position="553"/>
    </location>
</feature>
<feature type="region of interest" description="Disordered" evidence="4">
    <location>
        <begin position="597"/>
        <end position="624"/>
    </location>
</feature>
<feature type="region of interest" description="Disordered" evidence="4">
    <location>
        <begin position="676"/>
        <end position="712"/>
    </location>
</feature>
<feature type="region of interest" description="Disordered" evidence="4">
    <location>
        <begin position="725"/>
        <end position="764"/>
    </location>
</feature>
<feature type="short sequence motif" description="HD1">
    <location>
        <begin position="550"/>
        <end position="579"/>
    </location>
</feature>
<feature type="compositionally biased region" description="Low complexity" evidence="4">
    <location>
        <begin position="15"/>
        <end position="32"/>
    </location>
</feature>
<feature type="compositionally biased region" description="Low complexity" evidence="4">
    <location>
        <begin position="343"/>
        <end position="352"/>
    </location>
</feature>
<feature type="compositionally biased region" description="Polar residues" evidence="4">
    <location>
        <begin position="368"/>
        <end position="380"/>
    </location>
</feature>
<feature type="compositionally biased region" description="Polar residues" evidence="4">
    <location>
        <begin position="402"/>
        <end position="425"/>
    </location>
</feature>
<feature type="compositionally biased region" description="Low complexity" evidence="4">
    <location>
        <begin position="529"/>
        <end position="543"/>
    </location>
</feature>
<feature type="compositionally biased region" description="Polar residues" evidence="4">
    <location>
        <begin position="696"/>
        <end position="712"/>
    </location>
</feature>
<feature type="binding site" evidence="3">
    <location>
        <position position="634"/>
    </location>
    <ligand>
        <name>Zn(2+)</name>
        <dbReference type="ChEBI" id="CHEBI:29105"/>
    </ligand>
</feature>
<feature type="binding site" evidence="3">
    <location>
        <position position="637"/>
    </location>
    <ligand>
        <name>Zn(2+)</name>
        <dbReference type="ChEBI" id="CHEBI:29105"/>
    </ligand>
</feature>
<feature type="binding site" evidence="3">
    <location>
        <position position="653"/>
    </location>
    <ligand>
        <name>Zn(2+)</name>
        <dbReference type="ChEBI" id="CHEBI:29105"/>
    </ligand>
</feature>
<feature type="binding site" evidence="3">
    <location>
        <position position="657"/>
    </location>
    <ligand>
        <name>Zn(2+)</name>
        <dbReference type="ChEBI" id="CHEBI:29105"/>
    </ligand>
</feature>
<feature type="modified residue" description="Phosphothreonine" evidence="1">
    <location>
        <position position="611"/>
    </location>
</feature>
<feature type="modified residue" description="Phosphoserine" evidence="1">
    <location>
        <position position="613"/>
    </location>
</feature>
<feature type="modified residue" description="Phosphoserine" evidence="1">
    <location>
        <position position="743"/>
    </location>
</feature>
<feature type="cross-link" description="Glycyl lysine isopeptide (Lys-Gly) (interchain with G-Cter in SUMO2)" evidence="1">
    <location>
        <position position="590"/>
    </location>
</feature>
<feature type="cross-link" description="Glycyl lysine isopeptide (Lys-Gly) (interchain with G-Cter in SUMO2)" evidence="1">
    <location>
        <position position="592"/>
    </location>
</feature>
<feature type="cross-link" description="Glycyl lysine isopeptide (Lys-Gly) (interchain with G-Cter in SUMO2)" evidence="1">
    <location>
        <position position="624"/>
    </location>
</feature>
<feature type="cross-link" description="Glycyl lysine isopeptide (Lys-Gly) (interchain with G-Cter in SUMO2)" evidence="1">
    <location>
        <position position="694"/>
    </location>
</feature>
<feature type="cross-link" description="Glycyl lysine isopeptide (Lys-Gly) (interchain with G-Cter in SUMO2)" evidence="1">
    <location>
        <position position="839"/>
    </location>
</feature>
<feature type="splice variant" id="VSP_016919" description="In isoform 2." evidence="13 14">
    <location>
        <begin position="1"/>
        <end position="527"/>
    </location>
</feature>
<feature type="strand" evidence="16">
    <location>
        <begin position="560"/>
        <end position="565"/>
    </location>
</feature>
<feature type="strand" evidence="16">
    <location>
        <begin position="568"/>
        <end position="573"/>
    </location>
</feature>
<feature type="turn" evidence="16">
    <location>
        <begin position="578"/>
        <end position="580"/>
    </location>
</feature>
<feature type="helix" evidence="16">
    <location>
        <begin position="583"/>
        <end position="586"/>
    </location>
</feature>
<organism>
    <name type="scientific">Mus musculus</name>
    <name type="common">Mouse</name>
    <dbReference type="NCBI Taxonomy" id="10090"/>
    <lineage>
        <taxon>Eukaryota</taxon>
        <taxon>Metazoa</taxon>
        <taxon>Chordata</taxon>
        <taxon>Craniata</taxon>
        <taxon>Vertebrata</taxon>
        <taxon>Euteleostomi</taxon>
        <taxon>Mammalia</taxon>
        <taxon>Eutheria</taxon>
        <taxon>Euarchontoglires</taxon>
        <taxon>Glires</taxon>
        <taxon>Rodentia</taxon>
        <taxon>Myomorpha</taxon>
        <taxon>Muroidea</taxon>
        <taxon>Muridae</taxon>
        <taxon>Murinae</taxon>
        <taxon>Mus</taxon>
        <taxon>Mus</taxon>
    </lineage>
</organism>
<sequence length="850" mass="89799">MENELPVPHTSNRASVTTNTSGTNSSSGCISSSGGGGGSGGRPTAPQISVYSGIPDRQTVQVIQQALHRQPSTAAQYLQQMYAAQQQHLMLQTAALQQQHLSSAQLQSLAAVQQASLVANRQGSTPGSSVSSQAPAQSSSLNLAASPAAAQLINRAQSVNSAAASGLAQQAVLLGNTSSPALTASQAQMYLRAQMLIFTPTATVATVQPELCTGSPARPPTPAQVQNLTLRTQQTPAAAASGPPPTQPVLPSLALKPTPSSSQPLPAPPQGRTMAQGSPAGAKPSGTDNAPETLKAGDGNCNMEGRPGPGRAVPAVATHPLIAPAYAHLQSHQLLPQPPAKHPQPQFVAQQQPQPPRPAPQVQSQPQLASVSPSLALQSSPEDHALPLGSVTQALPLQCSTTHVHKPGNSQQCHLPTLDTGSQNGHPEGGSHPPQRRFQHTSAVILQVQPASPVTPQQCAPDDWKEVVPAEKSVPVARPGPSPHQQAIIPAIPGGLPGPKSPNIQQCPAHETGQGIVHALTDLSSPGMTSGNGNSASSIAGTAPQNGENKPPQAIVKPQILTHVIEGFVIQEGAEPFPVGRSSLLVGNLKKKYAQGFLPEKPPQQDHTTTTDSEMEEPYLQESKEEGTPLKLKCELCGRVDFAYKFKRSKRFCSMACAKRYNVGCTKRVGLFHSDRSKLQKAGTTTHNRRRASKASLPTLTKDTKKQPSGTVPLSVTAALQLAHSQEDSSRCSDNSSYEEPLSPISASSSTSRRRQGQRDLDLPDMHMRDLVGVGHHFLPSEPTKWNVEDVYEFIRSLPGCQEIAEEFRAQEIDGQALLLLKEDHLMSAMNIKLGPALKIYARISMLKDS</sequence>
<keyword id="KW-0002">3D-structure</keyword>
<keyword id="KW-0025">Alternative splicing</keyword>
<keyword id="KW-0217">Developmental protein</keyword>
<keyword id="KW-0238">DNA-binding</keyword>
<keyword id="KW-1017">Isopeptide bond</keyword>
<keyword id="KW-0479">Metal-binding</keyword>
<keyword id="KW-0539">Nucleus</keyword>
<keyword id="KW-0597">Phosphoprotein</keyword>
<keyword id="KW-1185">Reference proteome</keyword>
<keyword id="KW-0832">Ubl conjugation</keyword>
<keyword id="KW-0862">Zinc</keyword>
<keyword id="KW-0863">Zinc-finger</keyword>
<protein>
    <recommendedName>
        <fullName>Polyhomeotic-like protein 2</fullName>
        <shortName>mPH2</shortName>
    </recommendedName>
    <alternativeName>
        <fullName>Early development regulatory protein 2</fullName>
    </alternativeName>
    <alternativeName>
        <fullName>p36</fullName>
    </alternativeName>
</protein>
<evidence type="ECO:0000250" key="1">
    <source>
        <dbReference type="UniProtKB" id="Q8IXK0"/>
    </source>
</evidence>
<evidence type="ECO:0000255" key="2">
    <source>
        <dbReference type="PROSITE-ProRule" id="PRU00184"/>
    </source>
</evidence>
<evidence type="ECO:0000255" key="3">
    <source>
        <dbReference type="PROSITE-ProRule" id="PRU00367"/>
    </source>
</evidence>
<evidence type="ECO:0000256" key="4">
    <source>
        <dbReference type="SAM" id="MobiDB-lite"/>
    </source>
</evidence>
<evidence type="ECO:0000269" key="5">
    <source>
    </source>
</evidence>
<evidence type="ECO:0000269" key="6">
    <source>
    </source>
</evidence>
<evidence type="ECO:0000269" key="7">
    <source>
    </source>
</evidence>
<evidence type="ECO:0000269" key="8">
    <source>
    </source>
</evidence>
<evidence type="ECO:0000269" key="9">
    <source>
    </source>
</evidence>
<evidence type="ECO:0000269" key="10">
    <source>
    </source>
</evidence>
<evidence type="ECO:0000269" key="11">
    <source>
    </source>
</evidence>
<evidence type="ECO:0000269" key="12">
    <source>
    </source>
</evidence>
<evidence type="ECO:0000303" key="13">
    <source>
    </source>
</evidence>
<evidence type="ECO:0000303" key="14">
    <source>
    </source>
</evidence>
<evidence type="ECO:0007744" key="15">
    <source>
        <dbReference type="PDB" id="2NA1"/>
    </source>
</evidence>
<evidence type="ECO:0007829" key="16">
    <source>
        <dbReference type="PDB" id="2NA1"/>
    </source>
</evidence>
<reference key="1">
    <citation type="journal article" date="2002" name="Gene">
        <title>The mouse Edr2 (Mph2) gene has two forms of mRNA encoding 90- and 36-kDa polypeptides.</title>
        <authorList>
            <person name="Yamaki M."/>
            <person name="Isono K."/>
            <person name="Takada Y."/>
            <person name="Abe K."/>
            <person name="Akasaka T."/>
            <person name="Tanzawa H."/>
            <person name="Koseki H."/>
        </authorList>
    </citation>
    <scope>NUCLEOTIDE SEQUENCE [MRNA] (ISOFORM 2)</scope>
    <scope>DOMAIN HD1 MOTIF</scope>
    <scope>TISSUE SPECIFICITY</scope>
</reference>
<reference key="2">
    <citation type="submission" date="1996-12" db="EMBL/GenBank/DDBJ databases">
        <title>The basic helix-loop-helix protein Th1 interacts with polycomb-group proteins.</title>
        <authorList>
            <person name="Howard T.L."/>
            <person name="Ingermann A.R."/>
            <person name="Hollenberg S.M."/>
        </authorList>
    </citation>
    <scope>NUCLEOTIDE SEQUENCE [MRNA] (ISOFORM 1)</scope>
    <source>
        <strain>NIH Swiss</strain>
    </source>
</reference>
<reference key="3">
    <citation type="journal article" date="2009" name="PLoS Biol.">
        <title>Lineage-specific biology revealed by a finished genome assembly of the mouse.</title>
        <authorList>
            <person name="Church D.M."/>
            <person name="Goodstadt L."/>
            <person name="Hillier L.W."/>
            <person name="Zody M.C."/>
            <person name="Goldstein S."/>
            <person name="She X."/>
            <person name="Bult C.J."/>
            <person name="Agarwala R."/>
            <person name="Cherry J.L."/>
            <person name="DiCuccio M."/>
            <person name="Hlavina W."/>
            <person name="Kapustin Y."/>
            <person name="Meric P."/>
            <person name="Maglott D."/>
            <person name="Birtle Z."/>
            <person name="Marques A.C."/>
            <person name="Graves T."/>
            <person name="Zhou S."/>
            <person name="Teague B."/>
            <person name="Potamousis K."/>
            <person name="Churas C."/>
            <person name="Place M."/>
            <person name="Herschleb J."/>
            <person name="Runnheim R."/>
            <person name="Forrest D."/>
            <person name="Amos-Landgraf J."/>
            <person name="Schwartz D.C."/>
            <person name="Cheng Z."/>
            <person name="Lindblad-Toh K."/>
            <person name="Eichler E.E."/>
            <person name="Ponting C.P."/>
        </authorList>
    </citation>
    <scope>NUCLEOTIDE SEQUENCE [LARGE SCALE GENOMIC DNA]</scope>
    <source>
        <strain>C57BL/6J</strain>
    </source>
</reference>
<reference key="4">
    <citation type="journal article" date="2004" name="Genome Res.">
        <title>The status, quality, and expansion of the NIH full-length cDNA project: the Mammalian Gene Collection (MGC).</title>
        <authorList>
            <consortium name="The MGC Project Team"/>
        </authorList>
    </citation>
    <scope>NUCLEOTIDE SEQUENCE [LARGE SCALE MRNA] (ISOFORMS 1 AND 2)</scope>
    <source>
        <strain>C57BL/6J</strain>
        <strain>FVB/N</strain>
        <tissue>Brain</tissue>
        <tissue>Mammary tumor</tissue>
    </source>
</reference>
<reference key="5">
    <citation type="journal article" date="1998" name="Oncogene">
        <title>The Bmi-1 oncoprotein interacts with dinG and MPh2: the role of RING finger domains.</title>
        <authorList>
            <person name="Hemenway C.S."/>
            <person name="Halligan B.W."/>
            <person name="Levy L.S."/>
        </authorList>
    </citation>
    <scope>NUCLEOTIDE SEQUENCE [MRNA] OF 419-850 (ISOFORM 1)</scope>
    <scope>INTERACTION WITH BMI1 AND RNF2</scope>
</reference>
<reference key="6">
    <citation type="journal article" date="2005" name="Dev. Dyn.">
        <title>Mph2 expression in germinal zones of the mouse brain.</title>
        <authorList>
            <person name="Kim M.H."/>
            <person name="Gunnersen J.M."/>
            <person name="Tan S.S."/>
        </authorList>
    </citation>
    <scope>DEVELOPMENTAL STAGE</scope>
</reference>
<reference key="7">
    <citation type="journal article" date="2005" name="Mol. Cell. Biol.">
        <title>Mammalian polyhomeotic homologues Phc2 and Phc1 act in synergy to mediate polycomb repression of Hox genes.</title>
        <authorList>
            <person name="Isono K."/>
            <person name="Fujimura Y."/>
            <person name="Shinga J."/>
            <person name="Yamaki M."/>
            <person name="O-Wang J."/>
            <person name="Takihara Y."/>
            <person name="Murahashi Y."/>
            <person name="Takada Y."/>
            <person name="Mizutani-Koseki Y."/>
            <person name="Koseki H."/>
        </authorList>
    </citation>
    <scope>FUNCTION</scope>
    <scope>DISRUPTION PHENOTYPE</scope>
    <scope>INTERACTION WITH PCGF2; PHC1 AND RNF2</scope>
</reference>
<reference key="8">
    <citation type="journal article" date="2012" name="Mol. Cell. Proteomics">
        <title>Five friends of methylated chromatin target of protein-arginine-methyltransferase[prmt]-1 (chtop), a complex linking arginine methylation to desumoylation.</title>
        <authorList>
            <person name="Fanis P."/>
            <person name="Gillemans N."/>
            <person name="Aghajanirefah A."/>
            <person name="Pourfarzad F."/>
            <person name="Demmers J."/>
            <person name="Esteghamat F."/>
            <person name="Vadlamudi R.K."/>
            <person name="Grosveld F."/>
            <person name="Philipsen S."/>
            <person name="van Dijk T.B."/>
        </authorList>
    </citation>
    <scope>INTERACTION WITH CHTOP</scope>
</reference>
<reference key="9">
    <citation type="journal article" date="2017" name="Proc. Natl. Acad. Sci. U.S.A.">
        <title>Samd7 is a cell type-specific PRC1 component essential for establishing retinal rod photoreceptor identity.</title>
        <authorList>
            <person name="Omori Y."/>
            <person name="Kubo S."/>
            <person name="Kon T."/>
            <person name="Furuhashi M."/>
            <person name="Narita H."/>
            <person name="Kominami T."/>
            <person name="Ueno A."/>
            <person name="Tsutsumi R."/>
            <person name="Chaya T."/>
            <person name="Yamamoto H."/>
            <person name="Suetake I."/>
            <person name="Ueno S."/>
            <person name="Koseki H."/>
            <person name="Nakagawa A."/>
            <person name="Furukawa T."/>
        </authorList>
    </citation>
    <scope>SUBCELLULAR LOCATION</scope>
    <scope>INTERACTION WITH SAMD7</scope>
</reference>
<reference key="10">
    <citation type="journal article" date="2021" name="Sci. Rep.">
        <title>Functional analysis of Samd11, a retinal photoreceptor PRC1 component, in establishing rod photoreceptor identity.</title>
        <authorList>
            <person name="Kubo S."/>
            <person name="Yamamoto H."/>
            <person name="Kajimura N."/>
            <person name="Omori Y."/>
            <person name="Maeda Y."/>
            <person name="Chaya T."/>
            <person name="Furukawa T."/>
        </authorList>
    </citation>
    <scope>INTERACTION WITH SAMD11</scope>
</reference>
<reference evidence="15" key="11">
    <citation type="journal article" date="2016" name="Nat. Commun.">
        <title>BMI1 regulates PRC1 architecture and activity through homo- and hetero-oligomerization.</title>
        <authorList>
            <person name="Gray F."/>
            <person name="Cho H.J."/>
            <person name="Shukla S."/>
            <person name="He S."/>
            <person name="Harris A."/>
            <person name="Boytsov B."/>
            <person name="Jaremko L."/>
            <person name="Jaremko M."/>
            <person name="Demeler B."/>
            <person name="Lawlor E.R."/>
            <person name="Grembecka J."/>
            <person name="Cierpicki T."/>
        </authorList>
    </citation>
    <scope>STRUCTURE BY NMR OF 557-590 IN COMPLEX WITH BMI1</scope>
</reference>
<accession>Q9QWH1</accession>
<accession>B1AS98</accession>
<accession>B1ASA4</accession>
<accession>O88463</accession>
<accession>Q8K5D9</accession>
<gene>
    <name type="primary">Phc2</name>
    <name type="synonym">Edr2</name>
    <name type="synonym">Ph2</name>
</gene>
<dbReference type="EMBL" id="AB062362">
    <property type="protein sequence ID" value="BAB93527.1"/>
    <property type="molecule type" value="mRNA"/>
</dbReference>
<dbReference type="EMBL" id="U81491">
    <property type="protein sequence ID" value="AAD00519.1"/>
    <property type="molecule type" value="mRNA"/>
</dbReference>
<dbReference type="EMBL" id="AL611969">
    <property type="status" value="NOT_ANNOTATED_CDS"/>
    <property type="molecule type" value="Genomic_DNA"/>
</dbReference>
<dbReference type="EMBL" id="AL611983">
    <property type="status" value="NOT_ANNOTATED_CDS"/>
    <property type="molecule type" value="Genomic_DNA"/>
</dbReference>
<dbReference type="EMBL" id="BC057571">
    <property type="protein sequence ID" value="AAH57571.1"/>
    <property type="molecule type" value="mRNA"/>
</dbReference>
<dbReference type="EMBL" id="BC071246">
    <property type="protein sequence ID" value="AAH71246.1"/>
    <property type="molecule type" value="mRNA"/>
</dbReference>
<dbReference type="EMBL" id="AF060076">
    <property type="protein sequence ID" value="AAC23570.1"/>
    <property type="molecule type" value="mRNA"/>
</dbReference>
<dbReference type="CCDS" id="CCDS18674.1">
    <molecule id="Q9QWH1-1"/>
</dbReference>
<dbReference type="CCDS" id="CCDS57297.1">
    <molecule id="Q9QWH1-2"/>
</dbReference>
<dbReference type="RefSeq" id="NP_001182012.1">
    <molecule id="Q9QWH1-2"/>
    <property type="nucleotide sequence ID" value="NM_001195083.1"/>
</dbReference>
<dbReference type="RefSeq" id="NP_001182059.1">
    <molecule id="Q9QWH1-1"/>
    <property type="nucleotide sequence ID" value="NM_001195130.1"/>
</dbReference>
<dbReference type="RefSeq" id="NP_061244.1">
    <molecule id="Q9QWH1-1"/>
    <property type="nucleotide sequence ID" value="NM_018774.4"/>
</dbReference>
<dbReference type="RefSeq" id="XP_006503300.1">
    <property type="nucleotide sequence ID" value="XM_006503237.3"/>
</dbReference>
<dbReference type="RefSeq" id="XP_006503301.1">
    <molecule id="Q9QWH1-2"/>
    <property type="nucleotide sequence ID" value="XM_006503238.1"/>
</dbReference>
<dbReference type="RefSeq" id="XP_017175809.1">
    <molecule id="Q9QWH1-1"/>
    <property type="nucleotide sequence ID" value="XM_017320320.1"/>
</dbReference>
<dbReference type="RefSeq" id="XP_036020134.1">
    <molecule id="Q9QWH1-2"/>
    <property type="nucleotide sequence ID" value="XM_036164241.1"/>
</dbReference>
<dbReference type="PDB" id="2NA1">
    <property type="method" value="NMR"/>
    <property type="chains" value="A=557-590"/>
</dbReference>
<dbReference type="PDBsum" id="2NA1"/>
<dbReference type="SMR" id="Q9QWH1"/>
<dbReference type="BioGRID" id="207636">
    <property type="interactions" value="17"/>
</dbReference>
<dbReference type="FunCoup" id="Q9QWH1">
    <property type="interactions" value="3036"/>
</dbReference>
<dbReference type="IntAct" id="Q9QWH1">
    <property type="interactions" value="8"/>
</dbReference>
<dbReference type="MINT" id="Q9QWH1"/>
<dbReference type="STRING" id="10090.ENSMUSP00000030588"/>
<dbReference type="GlyGen" id="Q9QWH1">
    <property type="glycosylation" value="3 sites"/>
</dbReference>
<dbReference type="iPTMnet" id="Q9QWH1"/>
<dbReference type="PhosphoSitePlus" id="Q9QWH1"/>
<dbReference type="jPOST" id="Q9QWH1"/>
<dbReference type="PaxDb" id="10090-ENSMUSP00000101690"/>
<dbReference type="PeptideAtlas" id="Q9QWH1"/>
<dbReference type="ProteomicsDB" id="289489">
    <molecule id="Q9QWH1-1"/>
</dbReference>
<dbReference type="ProteomicsDB" id="289490">
    <molecule id="Q9QWH1-2"/>
</dbReference>
<dbReference type="Pumba" id="Q9QWH1"/>
<dbReference type="Antibodypedia" id="31416">
    <property type="antibodies" value="108 antibodies from 22 providers"/>
</dbReference>
<dbReference type="DNASU" id="54383"/>
<dbReference type="Ensembl" id="ENSMUST00000030588.13">
    <molecule id="Q9QWH1-1"/>
    <property type="protein sequence ID" value="ENSMUSP00000030588.7"/>
    <property type="gene ID" value="ENSMUSG00000028796.18"/>
</dbReference>
<dbReference type="Ensembl" id="ENSMUST00000106079.10">
    <molecule id="Q9QWH1-2"/>
    <property type="protein sequence ID" value="ENSMUSP00000101689.4"/>
    <property type="gene ID" value="ENSMUSG00000028796.18"/>
</dbReference>
<dbReference type="Ensembl" id="ENSMUST00000106080.8">
    <molecule id="Q9QWH1-1"/>
    <property type="protein sequence ID" value="ENSMUSP00000101690.2"/>
    <property type="gene ID" value="ENSMUSG00000028796.18"/>
</dbReference>
<dbReference type="GeneID" id="54383"/>
<dbReference type="KEGG" id="mmu:54383"/>
<dbReference type="UCSC" id="uc008uvh.2">
    <molecule id="Q9QWH1-1"/>
    <property type="organism name" value="mouse"/>
</dbReference>
<dbReference type="UCSC" id="uc008uvk.2">
    <molecule id="Q9QWH1-2"/>
    <property type="organism name" value="mouse"/>
</dbReference>
<dbReference type="AGR" id="MGI:1860454"/>
<dbReference type="CTD" id="1912"/>
<dbReference type="MGI" id="MGI:1860454">
    <property type="gene designation" value="Phc2"/>
</dbReference>
<dbReference type="VEuPathDB" id="HostDB:ENSMUSG00000028796"/>
<dbReference type="eggNOG" id="ENOG502QS5Q">
    <property type="taxonomic scope" value="Eukaryota"/>
</dbReference>
<dbReference type="GeneTree" id="ENSGT00940000160840"/>
<dbReference type="HOGENOM" id="CLU_012048_0_0_1"/>
<dbReference type="InParanoid" id="Q9QWH1"/>
<dbReference type="OMA" id="EGCAGRD"/>
<dbReference type="OrthoDB" id="2390104at2759"/>
<dbReference type="PhylomeDB" id="Q9QWH1"/>
<dbReference type="TreeFam" id="TF331299"/>
<dbReference type="Reactome" id="R-MMU-3108214">
    <property type="pathway name" value="SUMOylation of DNA damage response and repair proteins"/>
</dbReference>
<dbReference type="Reactome" id="R-MMU-3899300">
    <property type="pathway name" value="SUMOylation of transcription cofactors"/>
</dbReference>
<dbReference type="Reactome" id="R-MMU-4551638">
    <property type="pathway name" value="SUMOylation of chromatin organization proteins"/>
</dbReference>
<dbReference type="Reactome" id="R-MMU-4570464">
    <property type="pathway name" value="SUMOylation of RNA binding proteins"/>
</dbReference>
<dbReference type="Reactome" id="R-MMU-8939243">
    <property type="pathway name" value="RUNX1 interacts with co-factors whose precise effect on RUNX1 targets is not known"/>
</dbReference>
<dbReference type="BioGRID-ORCS" id="54383">
    <property type="hits" value="1 hit in 76 CRISPR screens"/>
</dbReference>
<dbReference type="ChiTaRS" id="Phc2">
    <property type="organism name" value="mouse"/>
</dbReference>
<dbReference type="PRO" id="PR:Q9QWH1"/>
<dbReference type="Proteomes" id="UP000000589">
    <property type="component" value="Chromosome 4"/>
</dbReference>
<dbReference type="RNAct" id="Q9QWH1">
    <property type="molecule type" value="protein"/>
</dbReference>
<dbReference type="Bgee" id="ENSMUSG00000028796">
    <property type="expression patterns" value="Expressed in rostral migratory stream and 267 other cell types or tissues"/>
</dbReference>
<dbReference type="ExpressionAtlas" id="Q9QWH1">
    <property type="expression patterns" value="baseline and differential"/>
</dbReference>
<dbReference type="GO" id="GO:0000792">
    <property type="term" value="C:heterochromatin"/>
    <property type="evidence" value="ECO:0000314"/>
    <property type="project" value="MGI"/>
</dbReference>
<dbReference type="GO" id="GO:0005654">
    <property type="term" value="C:nucleoplasm"/>
    <property type="evidence" value="ECO:0007669"/>
    <property type="project" value="Ensembl"/>
</dbReference>
<dbReference type="GO" id="GO:0005634">
    <property type="term" value="C:nucleus"/>
    <property type="evidence" value="ECO:0000314"/>
    <property type="project" value="UniProtKB"/>
</dbReference>
<dbReference type="GO" id="GO:0035102">
    <property type="term" value="C:PRC1 complex"/>
    <property type="evidence" value="ECO:0000314"/>
    <property type="project" value="MGI"/>
</dbReference>
<dbReference type="GO" id="GO:0003677">
    <property type="term" value="F:DNA binding"/>
    <property type="evidence" value="ECO:0007669"/>
    <property type="project" value="UniProtKB-KW"/>
</dbReference>
<dbReference type="GO" id="GO:0042802">
    <property type="term" value="F:identical protein binding"/>
    <property type="evidence" value="ECO:0007669"/>
    <property type="project" value="Ensembl"/>
</dbReference>
<dbReference type="GO" id="GO:0008270">
    <property type="term" value="F:zinc ion binding"/>
    <property type="evidence" value="ECO:0007669"/>
    <property type="project" value="UniProtKB-KW"/>
</dbReference>
<dbReference type="GO" id="GO:0007283">
    <property type="term" value="P:spermatogenesis"/>
    <property type="evidence" value="ECO:0000316"/>
    <property type="project" value="MGI"/>
</dbReference>
<dbReference type="CDD" id="cd09577">
    <property type="entry name" value="SAM_Ph1_2_3"/>
    <property type="match status" value="1"/>
</dbReference>
<dbReference type="DisProt" id="DP01315"/>
<dbReference type="FunFam" id="1.10.150.50:FF:000011">
    <property type="entry name" value="Polyhomeotic-like protein 2 isoform 1"/>
    <property type="match status" value="1"/>
</dbReference>
<dbReference type="FunFam" id="3.30.60.160:FF:000002">
    <property type="entry name" value="Polyhomeotic-like protein 2 isoform 1"/>
    <property type="match status" value="1"/>
</dbReference>
<dbReference type="Gene3D" id="3.30.60.160">
    <property type="match status" value="1"/>
</dbReference>
<dbReference type="Gene3D" id="1.10.150.50">
    <property type="entry name" value="Transcription Factor, Ets-1"/>
    <property type="match status" value="1"/>
</dbReference>
<dbReference type="InterPro" id="IPR050548">
    <property type="entry name" value="PcG_chromatin_remod_factors"/>
</dbReference>
<dbReference type="InterPro" id="IPR001660">
    <property type="entry name" value="SAM"/>
</dbReference>
<dbReference type="InterPro" id="IPR013761">
    <property type="entry name" value="SAM/pointed_sf"/>
</dbReference>
<dbReference type="InterPro" id="IPR012313">
    <property type="entry name" value="Znf_FCS"/>
</dbReference>
<dbReference type="InterPro" id="IPR038603">
    <property type="entry name" value="Znf_FCS_sf"/>
</dbReference>
<dbReference type="PANTHER" id="PTHR12247">
    <property type="entry name" value="POLYCOMB GROUP PROTEIN"/>
    <property type="match status" value="1"/>
</dbReference>
<dbReference type="PANTHER" id="PTHR12247:SF86">
    <property type="entry name" value="POLYHOMEOTIC-LIKE PROTEIN 2"/>
    <property type="match status" value="1"/>
</dbReference>
<dbReference type="Pfam" id="PF16616">
    <property type="entry name" value="PHC2_SAM_assoc"/>
    <property type="match status" value="1"/>
</dbReference>
<dbReference type="Pfam" id="PF00536">
    <property type="entry name" value="SAM_1"/>
    <property type="match status" value="1"/>
</dbReference>
<dbReference type="Pfam" id="PF21319">
    <property type="entry name" value="zf-FCS_1"/>
    <property type="match status" value="1"/>
</dbReference>
<dbReference type="SMART" id="SM00454">
    <property type="entry name" value="SAM"/>
    <property type="match status" value="1"/>
</dbReference>
<dbReference type="SUPFAM" id="SSF47769">
    <property type="entry name" value="SAM/Pointed domain"/>
    <property type="match status" value="1"/>
</dbReference>
<dbReference type="PROSITE" id="PS50105">
    <property type="entry name" value="SAM_DOMAIN"/>
    <property type="match status" value="1"/>
</dbReference>
<dbReference type="PROSITE" id="PS51024">
    <property type="entry name" value="ZF_FCS"/>
    <property type="match status" value="1"/>
</dbReference>